<name>GSA2_BACCQ</name>
<proteinExistence type="inferred from homology"/>
<dbReference type="EC" id="5.4.3.8" evidence="1"/>
<dbReference type="EMBL" id="CP000227">
    <property type="protein sequence ID" value="ACM14675.1"/>
    <property type="molecule type" value="Genomic_DNA"/>
</dbReference>
<dbReference type="SMR" id="B9IZ36"/>
<dbReference type="KEGG" id="bcq:BCQ_4248"/>
<dbReference type="HOGENOM" id="CLU_016922_1_5_9"/>
<dbReference type="UniPathway" id="UPA00251">
    <property type="reaction ID" value="UER00317"/>
</dbReference>
<dbReference type="Proteomes" id="UP000000441">
    <property type="component" value="Chromosome"/>
</dbReference>
<dbReference type="GO" id="GO:0005737">
    <property type="term" value="C:cytoplasm"/>
    <property type="evidence" value="ECO:0007669"/>
    <property type="project" value="UniProtKB-SubCell"/>
</dbReference>
<dbReference type="GO" id="GO:0042286">
    <property type="term" value="F:glutamate-1-semialdehyde 2,1-aminomutase activity"/>
    <property type="evidence" value="ECO:0007669"/>
    <property type="project" value="UniProtKB-UniRule"/>
</dbReference>
<dbReference type="GO" id="GO:0030170">
    <property type="term" value="F:pyridoxal phosphate binding"/>
    <property type="evidence" value="ECO:0007669"/>
    <property type="project" value="InterPro"/>
</dbReference>
<dbReference type="GO" id="GO:0008483">
    <property type="term" value="F:transaminase activity"/>
    <property type="evidence" value="ECO:0007669"/>
    <property type="project" value="InterPro"/>
</dbReference>
<dbReference type="GO" id="GO:0006782">
    <property type="term" value="P:protoporphyrinogen IX biosynthetic process"/>
    <property type="evidence" value="ECO:0007669"/>
    <property type="project" value="UniProtKB-UniRule"/>
</dbReference>
<dbReference type="CDD" id="cd00610">
    <property type="entry name" value="OAT_like"/>
    <property type="match status" value="1"/>
</dbReference>
<dbReference type="FunFam" id="3.40.640.10:FF:000021">
    <property type="entry name" value="Glutamate-1-semialdehyde 2,1-aminomutase"/>
    <property type="match status" value="1"/>
</dbReference>
<dbReference type="Gene3D" id="3.90.1150.10">
    <property type="entry name" value="Aspartate Aminotransferase, domain 1"/>
    <property type="match status" value="1"/>
</dbReference>
<dbReference type="Gene3D" id="3.40.640.10">
    <property type="entry name" value="Type I PLP-dependent aspartate aminotransferase-like (Major domain)"/>
    <property type="match status" value="1"/>
</dbReference>
<dbReference type="HAMAP" id="MF_00375">
    <property type="entry name" value="HemL_aminotrans_3"/>
    <property type="match status" value="1"/>
</dbReference>
<dbReference type="InterPro" id="IPR004639">
    <property type="entry name" value="4pyrrol_synth_GluAld_NH2Trfase"/>
</dbReference>
<dbReference type="InterPro" id="IPR005814">
    <property type="entry name" value="Aminotrans_3"/>
</dbReference>
<dbReference type="InterPro" id="IPR049704">
    <property type="entry name" value="Aminotrans_3_PPA_site"/>
</dbReference>
<dbReference type="InterPro" id="IPR015424">
    <property type="entry name" value="PyrdxlP-dep_Trfase"/>
</dbReference>
<dbReference type="InterPro" id="IPR015421">
    <property type="entry name" value="PyrdxlP-dep_Trfase_major"/>
</dbReference>
<dbReference type="InterPro" id="IPR015422">
    <property type="entry name" value="PyrdxlP-dep_Trfase_small"/>
</dbReference>
<dbReference type="NCBIfam" id="TIGR00713">
    <property type="entry name" value="hemL"/>
    <property type="match status" value="1"/>
</dbReference>
<dbReference type="NCBIfam" id="NF000818">
    <property type="entry name" value="PRK00062.1"/>
    <property type="match status" value="1"/>
</dbReference>
<dbReference type="PANTHER" id="PTHR43713">
    <property type="entry name" value="GLUTAMATE-1-SEMIALDEHYDE 2,1-AMINOMUTASE"/>
    <property type="match status" value="1"/>
</dbReference>
<dbReference type="PANTHER" id="PTHR43713:SF3">
    <property type="entry name" value="GLUTAMATE-1-SEMIALDEHYDE 2,1-AMINOMUTASE 1, CHLOROPLASTIC-RELATED"/>
    <property type="match status" value="1"/>
</dbReference>
<dbReference type="Pfam" id="PF00202">
    <property type="entry name" value="Aminotran_3"/>
    <property type="match status" value="1"/>
</dbReference>
<dbReference type="SUPFAM" id="SSF53383">
    <property type="entry name" value="PLP-dependent transferases"/>
    <property type="match status" value="1"/>
</dbReference>
<dbReference type="PROSITE" id="PS00600">
    <property type="entry name" value="AA_TRANSFER_CLASS_3"/>
    <property type="match status" value="1"/>
</dbReference>
<evidence type="ECO:0000255" key="1">
    <source>
        <dbReference type="HAMAP-Rule" id="MF_00375"/>
    </source>
</evidence>
<sequence length="429" mass="46005">MKKFDKSIAAFEEAQDLMPGGVNSPVRAFKSVGMNPLFMERGKGSKVYDIDGNEYIDYVLSWGPLIHGHANDRVVEALKAVAERGTSFGAPTEIENKLAKLVIERVPSIEIVRMVNSGTEATMSALRLARGYTGRNKILKFIGCYHGHGDSLLIKAGSGVATLGLPDSPGVPEGVAKNTITVAYNDLESVKYAFEQFGDDIACVIVEPVAGNMGVVPPQPGFLEGLREVTEQNGALLIFDEVMTGFRVAYNCGQGYYGVTPDLTCLGKVIGGGLPVGAYGGKAEIMRQVAPSGPIYQAGTLSGNPLAMAAGYETLVQLTPESYVEFERKAEMLEAGLRKAAEKHGIPHHINRAGSMIGIFFTDEPVINYDAAKSSNLEFFAAYYREMVEQGVFLPPSQFEGLFLSTAHSDADIEATIAAAEIAMSKLKA</sequence>
<accession>B9IZ36</accession>
<gene>
    <name evidence="1" type="primary">hemL2</name>
    <name type="ordered locus">BCQ_4248</name>
</gene>
<reference key="1">
    <citation type="journal article" date="2009" name="J. Bacteriol.">
        <title>Complete genome sequence of the extremophilic Bacillus cereus strain Q1 with industrial applications.</title>
        <authorList>
            <person name="Xiong Z."/>
            <person name="Jiang Y."/>
            <person name="Qi D."/>
            <person name="Lu H."/>
            <person name="Yang F."/>
            <person name="Yang J."/>
            <person name="Chen L."/>
            <person name="Sun L."/>
            <person name="Xu X."/>
            <person name="Xue Y."/>
            <person name="Zhu Y."/>
            <person name="Jin Q."/>
        </authorList>
    </citation>
    <scope>NUCLEOTIDE SEQUENCE [LARGE SCALE GENOMIC DNA]</scope>
    <source>
        <strain>Q1</strain>
    </source>
</reference>
<comment type="catalytic activity">
    <reaction evidence="1">
        <text>(S)-4-amino-5-oxopentanoate = 5-aminolevulinate</text>
        <dbReference type="Rhea" id="RHEA:14265"/>
        <dbReference type="ChEBI" id="CHEBI:57501"/>
        <dbReference type="ChEBI" id="CHEBI:356416"/>
        <dbReference type="EC" id="5.4.3.8"/>
    </reaction>
</comment>
<comment type="cofactor">
    <cofactor evidence="1">
        <name>pyridoxal 5'-phosphate</name>
        <dbReference type="ChEBI" id="CHEBI:597326"/>
    </cofactor>
</comment>
<comment type="pathway">
    <text evidence="1">Porphyrin-containing compound metabolism; protoporphyrin-IX biosynthesis; 5-aminolevulinate from L-glutamyl-tRNA(Glu): step 2/2.</text>
</comment>
<comment type="subunit">
    <text evidence="1">Homodimer.</text>
</comment>
<comment type="subcellular location">
    <subcellularLocation>
        <location evidence="1">Cytoplasm</location>
    </subcellularLocation>
</comment>
<comment type="similarity">
    <text evidence="1">Belongs to the class-III pyridoxal-phosphate-dependent aminotransferase family. HemL subfamily.</text>
</comment>
<feature type="chain" id="PRO_0000382274" description="Glutamate-1-semialdehyde 2,1-aminomutase 2">
    <location>
        <begin position="1"/>
        <end position="429"/>
    </location>
</feature>
<feature type="modified residue" description="N6-(pyridoxal phosphate)lysine" evidence="1">
    <location>
        <position position="268"/>
    </location>
</feature>
<organism>
    <name type="scientific">Bacillus cereus (strain Q1)</name>
    <dbReference type="NCBI Taxonomy" id="361100"/>
    <lineage>
        <taxon>Bacteria</taxon>
        <taxon>Bacillati</taxon>
        <taxon>Bacillota</taxon>
        <taxon>Bacilli</taxon>
        <taxon>Bacillales</taxon>
        <taxon>Bacillaceae</taxon>
        <taxon>Bacillus</taxon>
        <taxon>Bacillus cereus group</taxon>
    </lineage>
</organism>
<keyword id="KW-0963">Cytoplasm</keyword>
<keyword id="KW-0413">Isomerase</keyword>
<keyword id="KW-0627">Porphyrin biosynthesis</keyword>
<keyword id="KW-0663">Pyridoxal phosphate</keyword>
<protein>
    <recommendedName>
        <fullName evidence="1">Glutamate-1-semialdehyde 2,1-aminomutase 2</fullName>
        <shortName evidence="1">GSA 2</shortName>
        <ecNumber evidence="1">5.4.3.8</ecNumber>
    </recommendedName>
    <alternativeName>
        <fullName evidence="1">Glutamate-1-semialdehyde aminotransferase 2</fullName>
        <shortName evidence="1">GSA-AT 2</shortName>
    </alternativeName>
</protein>